<sequence>MCFASSIIEAHRKLFIAPPDLDHSDPATPTISTRSKMPRGKSRLQTEVCGDCGAGDPSWASINRGILLCADCCSVHRSLGRHISIVKSLRQGNWEPSVLNFVNSLNAHGANSVWEHHLLDGSTNSTGGKHVPRWRKPTPKDALHPTKSDFIKAKHVNLTFVLKPSLQDDDDGNGSAGCLEQELSRQLHASVRTSNLETSLRFLVQGADPNYYHEDKLSTPLHMAAKFGQASQIEMLLIYGADVNALDGNGMTPLELARANNHNTIAERLLDAMYDVTDRIITFLGGKKPDHASGRHMIIPDANGADISEQLKIARGKLQLVPNKMFEELVMDLYDEVDRRECEAIWSTSTLNADHATVPFLPANPFLSATRNQGRQKLARFNRAEFTGLLTDVLVDAMRRQNMANLRPMDAPVAGHQSLQSLPYANNSMLLGSFEQGGHDPNLSDDEPIYDPVASDDDYAPVPPMAQQAIVHTPPRSANSHNEMETLRKQLNDYKSEINQLKNVVQMLSSENTQLKSKFSSASNNSVYDEPLRIDLSLSSPDTEHEPLSLPEGGTANGESGSSNDSSNQSTIKRPASMYERRLVPNVAKGNTDIRNTTSMYQMAGDGKPFGEEVKVRSDLVTRRLKELIRAMQPVPEDQKQSIAPHGELIRSAVTDLIALYANLPPNASDPSRETLKLLTRQNILIQHECENLQKAIEADDKQAIQKNTLEVRDCAFHIASAIKTLVLQFY</sequence>
<protein>
    <recommendedName>
        <fullName>ARF GTPase-activating protein Git</fullName>
        <shortName>ARF GAP GIT</shortName>
        <shortName evidence="8">dGIT protein</shortName>
    </recommendedName>
    <alternativeName>
        <fullName>G protein-coupled receptor kinase interacting ArfGAP</fullName>
    </alternativeName>
</protein>
<accession>Q95RG8</accession>
<accession>Q9V5N5</accession>
<evidence type="ECO:0000250" key="1">
    <source>
        <dbReference type="UniProtKB" id="Q9Y2X7"/>
    </source>
</evidence>
<evidence type="ECO:0000250" key="2">
    <source>
        <dbReference type="UniProtKB" id="Q9Z272"/>
    </source>
</evidence>
<evidence type="ECO:0000255" key="3"/>
<evidence type="ECO:0000255" key="4">
    <source>
        <dbReference type="PROSITE-ProRule" id="PRU00288"/>
    </source>
</evidence>
<evidence type="ECO:0000256" key="5">
    <source>
        <dbReference type="SAM" id="MobiDB-lite"/>
    </source>
</evidence>
<evidence type="ECO:0000269" key="6">
    <source>
    </source>
</evidence>
<evidence type="ECO:0000269" key="7">
    <source>
    </source>
</evidence>
<evidence type="ECO:0000303" key="8">
    <source>
    </source>
</evidence>
<evidence type="ECO:0000312" key="9">
    <source>
        <dbReference type="FlyBase" id="FBgn0033539"/>
    </source>
</evidence>
<gene>
    <name type="primary">Git</name>
    <name type="synonym">arfgap2</name>
    <name evidence="9" type="ORF">CG16728</name>
</gene>
<comment type="function">
    <text evidence="1 2 6 7">GTPase-activating protein for ADP ribosylation factor family members, including ARF1. Multidomain scaffold protein that interacts with numerous proteins and therefore participates in many cellular functions, including receptor internalization, focal adhesion remodeling, and signaling by both G protein-coupled receptors and tyrosine kinase receptors (By similarity). Through Pak activation, may positively regulate microtubule nucleation during interphase. May play a role in the regulation of cytokinesis (By similarity). During embryogenesis, promotes proper muscle morphogenesis and proper guidance and targeting of subsets of myotubes (PubMed:18996366). Required for the recruitment of Pak to muscle attachments in the embryo, probably indirectly through pix/dPIX (PubMed:18996366). May be important for brain development (PubMed:25792865).</text>
</comment>
<comment type="subunit">
    <text evidence="2 6">May form homodimers (via coiled coil) (By similarity). Forms a complex with pix and Pak; the interaction with Pak may be indirect and mediated by pix/dPIX (PubMed:18996366).</text>
</comment>
<comment type="interaction">
    <interactant intactId="EBI-164241">
        <id>Q95RG8</id>
    </interactant>
    <interactant intactId="EBI-165562">
        <id>Q9VIN1</id>
        <label>RtGEF</label>
    </interactant>
    <organismsDiffer>false</organismsDiffer>
    <experiments>3</experiments>
</comment>
<comment type="subcellular location">
    <subcellularLocation>
        <location evidence="6">Cytoplasm</location>
    </subcellularLocation>
    <subcellularLocation>
        <location evidence="1">Synapse</location>
    </subcellularLocation>
    <subcellularLocation>
        <location evidence="1">Cell junction</location>
        <location evidence="1">Focal adhesion</location>
    </subcellularLocation>
    <subcellularLocation>
        <location evidence="1">Cell projection</location>
        <location evidence="1">Lamellipodium</location>
    </subcellularLocation>
    <subcellularLocation>
        <location evidence="1">Cytoplasm</location>
        <location evidence="1">Cytoskeleton</location>
        <location evidence="1">Microtubule organizing center</location>
        <location evidence="1">Centrosome</location>
    </subcellularLocation>
    <subcellularLocation>
        <location evidence="1">Cytoplasm</location>
        <location evidence="1">Cytoskeleton</location>
        <location evidence="1">Spindle pole</location>
    </subcellularLocation>
    <text evidence="6">Localizes to the leading edge of growing myotubes.</text>
</comment>
<comment type="tissue specificity">
    <text evidence="6">Expressed in embryonic muscle syncytia (at protein level).</text>
</comment>
<comment type="developmental stage">
    <text evidence="6">Detected muscle syncytia in embryonic stage 14 and early stage 15. At mid stage 15, localizes at the leading edge of growing myotubes. In the ventral ends of VO5 and VO6 muscles enriched at the base of membrane protrusions at the leading edge of growing myotubes, while it is less expressed in filopodia. In the late stage embryo, concentrated at all muscle attachment sites, although subtle variation in expression and/or localization may be observed in different muscles subsets. Remains enriched in myotubes until the end of embryogenesis (at protein level).</text>
</comment>
<comment type="domain">
    <text evidence="2">The coiled coil region may mediate dimerization.</text>
</comment>
<comment type="disruption phenotype">
    <text evidence="6 7">Homozygous knockout flies show a semi-lethal phenotype and exhibit defective wing morphology at 100% penetrance (PubMed:18996366). Mutant embryos show striking guidance phenotypes in ventral oblique muscle 5 (VO5) and ventral oblique muscle 6 (VO6), characterized by bypass and mistargeting of the mutant muscles toward the ventral midline. Defects in targeting of the growing ventral tips of mutant muscles toward the ventral midline are already detectable at late stage 14/early stage 15 embryos. Defects in other ventral muscles are less obvious, although ventral acute muscle 3 (VA3) occasionally show mistargeting toward the ventral midline (PubMed:18996366). Defects in number and shape of subsets of muscles are also observed, but at low frequency (PubMed:18996366). Adult knockout flies show decreased central brain size and abnormal morphology of the mushroom body, the most common pattern being early termination of one alpha-lobe. The penetrance of the impaired mushroom body development is incomplete (PubMed:25792865).</text>
</comment>
<reference key="1">
    <citation type="journal article" date="2000" name="Science">
        <title>The genome sequence of Drosophila melanogaster.</title>
        <authorList>
            <person name="Adams M.D."/>
            <person name="Celniker S.E."/>
            <person name="Holt R.A."/>
            <person name="Evans C.A."/>
            <person name="Gocayne J.D."/>
            <person name="Amanatides P.G."/>
            <person name="Scherer S.E."/>
            <person name="Li P.W."/>
            <person name="Hoskins R.A."/>
            <person name="Galle R.F."/>
            <person name="George R.A."/>
            <person name="Lewis S.E."/>
            <person name="Richards S."/>
            <person name="Ashburner M."/>
            <person name="Henderson S.N."/>
            <person name="Sutton G.G."/>
            <person name="Wortman J.R."/>
            <person name="Yandell M.D."/>
            <person name="Zhang Q."/>
            <person name="Chen L.X."/>
            <person name="Brandon R.C."/>
            <person name="Rogers Y.-H.C."/>
            <person name="Blazej R.G."/>
            <person name="Champe M."/>
            <person name="Pfeiffer B.D."/>
            <person name="Wan K.H."/>
            <person name="Doyle C."/>
            <person name="Baxter E.G."/>
            <person name="Helt G."/>
            <person name="Nelson C.R."/>
            <person name="Miklos G.L.G."/>
            <person name="Abril J.F."/>
            <person name="Agbayani A."/>
            <person name="An H.-J."/>
            <person name="Andrews-Pfannkoch C."/>
            <person name="Baldwin D."/>
            <person name="Ballew R.M."/>
            <person name="Basu A."/>
            <person name="Baxendale J."/>
            <person name="Bayraktaroglu L."/>
            <person name="Beasley E.M."/>
            <person name="Beeson K.Y."/>
            <person name="Benos P.V."/>
            <person name="Berman B.P."/>
            <person name="Bhandari D."/>
            <person name="Bolshakov S."/>
            <person name="Borkova D."/>
            <person name="Botchan M.R."/>
            <person name="Bouck J."/>
            <person name="Brokstein P."/>
            <person name="Brottier P."/>
            <person name="Burtis K.C."/>
            <person name="Busam D.A."/>
            <person name="Butler H."/>
            <person name="Cadieu E."/>
            <person name="Center A."/>
            <person name="Chandra I."/>
            <person name="Cherry J.M."/>
            <person name="Cawley S."/>
            <person name="Dahlke C."/>
            <person name="Davenport L.B."/>
            <person name="Davies P."/>
            <person name="de Pablos B."/>
            <person name="Delcher A."/>
            <person name="Deng Z."/>
            <person name="Mays A.D."/>
            <person name="Dew I."/>
            <person name="Dietz S.M."/>
            <person name="Dodson K."/>
            <person name="Doup L.E."/>
            <person name="Downes M."/>
            <person name="Dugan-Rocha S."/>
            <person name="Dunkov B.C."/>
            <person name="Dunn P."/>
            <person name="Durbin K.J."/>
            <person name="Evangelista C.C."/>
            <person name="Ferraz C."/>
            <person name="Ferriera S."/>
            <person name="Fleischmann W."/>
            <person name="Fosler C."/>
            <person name="Gabrielian A.E."/>
            <person name="Garg N.S."/>
            <person name="Gelbart W.M."/>
            <person name="Glasser K."/>
            <person name="Glodek A."/>
            <person name="Gong F."/>
            <person name="Gorrell J.H."/>
            <person name="Gu Z."/>
            <person name="Guan P."/>
            <person name="Harris M."/>
            <person name="Harris N.L."/>
            <person name="Harvey D.A."/>
            <person name="Heiman T.J."/>
            <person name="Hernandez J.R."/>
            <person name="Houck J."/>
            <person name="Hostin D."/>
            <person name="Houston K.A."/>
            <person name="Howland T.J."/>
            <person name="Wei M.-H."/>
            <person name="Ibegwam C."/>
            <person name="Jalali M."/>
            <person name="Kalush F."/>
            <person name="Karpen G.H."/>
            <person name="Ke Z."/>
            <person name="Kennison J.A."/>
            <person name="Ketchum K.A."/>
            <person name="Kimmel B.E."/>
            <person name="Kodira C.D."/>
            <person name="Kraft C.L."/>
            <person name="Kravitz S."/>
            <person name="Kulp D."/>
            <person name="Lai Z."/>
            <person name="Lasko P."/>
            <person name="Lei Y."/>
            <person name="Levitsky A.A."/>
            <person name="Li J.H."/>
            <person name="Li Z."/>
            <person name="Liang Y."/>
            <person name="Lin X."/>
            <person name="Liu X."/>
            <person name="Mattei B."/>
            <person name="McIntosh T.C."/>
            <person name="McLeod M.P."/>
            <person name="McPherson D."/>
            <person name="Merkulov G."/>
            <person name="Milshina N.V."/>
            <person name="Mobarry C."/>
            <person name="Morris J."/>
            <person name="Moshrefi A."/>
            <person name="Mount S.M."/>
            <person name="Moy M."/>
            <person name="Murphy B."/>
            <person name="Murphy L."/>
            <person name="Muzny D.M."/>
            <person name="Nelson D.L."/>
            <person name="Nelson D.R."/>
            <person name="Nelson K.A."/>
            <person name="Nixon K."/>
            <person name="Nusskern D.R."/>
            <person name="Pacleb J.M."/>
            <person name="Palazzolo M."/>
            <person name="Pittman G.S."/>
            <person name="Pan S."/>
            <person name="Pollard J."/>
            <person name="Puri V."/>
            <person name="Reese M.G."/>
            <person name="Reinert K."/>
            <person name="Remington K."/>
            <person name="Saunders R.D.C."/>
            <person name="Scheeler F."/>
            <person name="Shen H."/>
            <person name="Shue B.C."/>
            <person name="Siden-Kiamos I."/>
            <person name="Simpson M."/>
            <person name="Skupski M.P."/>
            <person name="Smith T.J."/>
            <person name="Spier E."/>
            <person name="Spradling A.C."/>
            <person name="Stapleton M."/>
            <person name="Strong R."/>
            <person name="Sun E."/>
            <person name="Svirskas R."/>
            <person name="Tector C."/>
            <person name="Turner R."/>
            <person name="Venter E."/>
            <person name="Wang A.H."/>
            <person name="Wang X."/>
            <person name="Wang Z.-Y."/>
            <person name="Wassarman D.A."/>
            <person name="Weinstock G.M."/>
            <person name="Weissenbach J."/>
            <person name="Williams S.M."/>
            <person name="Woodage T."/>
            <person name="Worley K.C."/>
            <person name="Wu D."/>
            <person name="Yang S."/>
            <person name="Yao Q.A."/>
            <person name="Ye J."/>
            <person name="Yeh R.-F."/>
            <person name="Zaveri J.S."/>
            <person name="Zhan M."/>
            <person name="Zhang G."/>
            <person name="Zhao Q."/>
            <person name="Zheng L."/>
            <person name="Zheng X.H."/>
            <person name="Zhong F.N."/>
            <person name="Zhong W."/>
            <person name="Zhou X."/>
            <person name="Zhu S.C."/>
            <person name="Zhu X."/>
            <person name="Smith H.O."/>
            <person name="Gibbs R.A."/>
            <person name="Myers E.W."/>
            <person name="Rubin G.M."/>
            <person name="Venter J.C."/>
        </authorList>
    </citation>
    <scope>NUCLEOTIDE SEQUENCE [LARGE SCALE GENOMIC DNA]</scope>
    <source>
        <strain>Berkeley</strain>
    </source>
</reference>
<reference key="2">
    <citation type="journal article" date="2002" name="Genome Biol.">
        <title>Annotation of the Drosophila melanogaster euchromatic genome: a systematic review.</title>
        <authorList>
            <person name="Misra S."/>
            <person name="Crosby M.A."/>
            <person name="Mungall C.J."/>
            <person name="Matthews B.B."/>
            <person name="Campbell K.S."/>
            <person name="Hradecky P."/>
            <person name="Huang Y."/>
            <person name="Kaminker J.S."/>
            <person name="Millburn G.H."/>
            <person name="Prochnik S.E."/>
            <person name="Smith C.D."/>
            <person name="Tupy J.L."/>
            <person name="Whitfield E.J."/>
            <person name="Bayraktaroglu L."/>
            <person name="Berman B.P."/>
            <person name="Bettencourt B.R."/>
            <person name="Celniker S.E."/>
            <person name="de Grey A.D.N.J."/>
            <person name="Drysdale R.A."/>
            <person name="Harris N.L."/>
            <person name="Richter J."/>
            <person name="Russo S."/>
            <person name="Schroeder A.J."/>
            <person name="Shu S.Q."/>
            <person name="Stapleton M."/>
            <person name="Yamada C."/>
            <person name="Ashburner M."/>
            <person name="Gelbart W.M."/>
            <person name="Rubin G.M."/>
            <person name="Lewis S.E."/>
        </authorList>
    </citation>
    <scope>GENOME REANNOTATION</scope>
    <source>
        <strain>Berkeley</strain>
    </source>
</reference>
<reference key="3">
    <citation type="journal article" date="2002" name="Genome Biol.">
        <title>A Drosophila full-length cDNA resource.</title>
        <authorList>
            <person name="Stapleton M."/>
            <person name="Carlson J.W."/>
            <person name="Brokstein P."/>
            <person name="Yu C."/>
            <person name="Champe M."/>
            <person name="George R.A."/>
            <person name="Guarin H."/>
            <person name="Kronmiller B."/>
            <person name="Pacleb J.M."/>
            <person name="Park S."/>
            <person name="Wan K.H."/>
            <person name="Rubin G.M."/>
            <person name="Celniker S.E."/>
        </authorList>
    </citation>
    <scope>NUCLEOTIDE SEQUENCE [LARGE SCALE MRNA]</scope>
    <source>
        <strain>Berkeley</strain>
        <tissue>Embryo</tissue>
    </source>
</reference>
<reference key="4">
    <citation type="journal article" date="2009" name="Dev. Biol.">
        <title>The Drosophila homologue of Arf-GAP GIT1, dGIT, is required for proper muscle morphogenesis and guidance during embryogenesis.</title>
        <authorList>
            <person name="Bahri S.M."/>
            <person name="Choy J.M."/>
            <person name="Manser E."/>
            <person name="Lim L."/>
            <person name="Yang X."/>
        </authorList>
    </citation>
    <scope>FUNCTION</scope>
    <scope>INTERACTION WITH PIX AND PAK</scope>
    <scope>SUBCELLULAR LOCATION</scope>
    <scope>TISSUE SPECIFICITY</scope>
    <scope>DEVELOPMENTAL STAGE</scope>
    <scope>DISRUPTION PHENOTYPE</scope>
</reference>
<reference key="5">
    <citation type="journal article" date="2015" name="Exp. Neurobiol.">
        <title>A critical role of GIT1 in vertebrate and invertebrate brain development.</title>
        <authorList>
            <person name="Hong S.T."/>
            <person name="Mah W."/>
        </authorList>
    </citation>
    <scope>FUNCTION</scope>
    <scope>DISRUPTION PHENOTYPE</scope>
</reference>
<proteinExistence type="evidence at protein level"/>
<name>GIT_DROME</name>
<organism>
    <name type="scientific">Drosophila melanogaster</name>
    <name type="common">Fruit fly</name>
    <dbReference type="NCBI Taxonomy" id="7227"/>
    <lineage>
        <taxon>Eukaryota</taxon>
        <taxon>Metazoa</taxon>
        <taxon>Ecdysozoa</taxon>
        <taxon>Arthropoda</taxon>
        <taxon>Hexapoda</taxon>
        <taxon>Insecta</taxon>
        <taxon>Pterygota</taxon>
        <taxon>Neoptera</taxon>
        <taxon>Endopterygota</taxon>
        <taxon>Diptera</taxon>
        <taxon>Brachycera</taxon>
        <taxon>Muscomorpha</taxon>
        <taxon>Ephydroidea</taxon>
        <taxon>Drosophilidae</taxon>
        <taxon>Drosophila</taxon>
        <taxon>Sophophora</taxon>
    </lineage>
</organism>
<feature type="chain" id="PRO_0000452578" description="ARF GTPase-activating protein Git">
    <location>
        <begin position="1"/>
        <end position="731"/>
    </location>
</feature>
<feature type="domain" description="Arf-GAP" evidence="4">
    <location>
        <begin position="32"/>
        <end position="168"/>
    </location>
</feature>
<feature type="repeat" description="ANK 1" evidence="3">
    <location>
        <begin position="216"/>
        <end position="245"/>
    </location>
</feature>
<feature type="repeat" description="ANK 2" evidence="3">
    <location>
        <begin position="249"/>
        <end position="278"/>
    </location>
</feature>
<feature type="zinc finger region" description="C4-type" evidence="4">
    <location>
        <begin position="49"/>
        <end position="72"/>
    </location>
</feature>
<feature type="region of interest" description="Disordered" evidence="5">
    <location>
        <begin position="124"/>
        <end position="145"/>
    </location>
</feature>
<feature type="region of interest" description="Disordered" evidence="5">
    <location>
        <begin position="435"/>
        <end position="461"/>
    </location>
</feature>
<feature type="region of interest" description="Disordered" evidence="5">
    <location>
        <begin position="537"/>
        <end position="582"/>
    </location>
</feature>
<feature type="coiled-coil region" evidence="3">
    <location>
        <begin position="477"/>
        <end position="518"/>
    </location>
</feature>
<feature type="compositionally biased region" description="Acidic residues" evidence="5">
    <location>
        <begin position="443"/>
        <end position="459"/>
    </location>
</feature>
<feature type="compositionally biased region" description="Low complexity" evidence="5">
    <location>
        <begin position="557"/>
        <end position="570"/>
    </location>
</feature>
<keyword id="KW-0040">ANK repeat</keyword>
<keyword id="KW-0965">Cell junction</keyword>
<keyword id="KW-0966">Cell projection</keyword>
<keyword id="KW-0175">Coiled coil</keyword>
<keyword id="KW-0963">Cytoplasm</keyword>
<keyword id="KW-0206">Cytoskeleton</keyword>
<keyword id="KW-0343">GTPase activation</keyword>
<keyword id="KW-0479">Metal-binding</keyword>
<keyword id="KW-1185">Reference proteome</keyword>
<keyword id="KW-0677">Repeat</keyword>
<keyword id="KW-0770">Synapse</keyword>
<keyword id="KW-0862">Zinc</keyword>
<keyword id="KW-0863">Zinc-finger</keyword>
<dbReference type="EMBL" id="AE013599">
    <property type="protein sequence ID" value="AAF58766.2"/>
    <property type="molecule type" value="Genomic_DNA"/>
</dbReference>
<dbReference type="EMBL" id="AY061380">
    <property type="protein sequence ID" value="AAL28928.1"/>
    <property type="molecule type" value="mRNA"/>
</dbReference>
<dbReference type="RefSeq" id="NP_610599.3">
    <property type="nucleotide sequence ID" value="NM_136755.4"/>
</dbReference>
<dbReference type="SMR" id="Q95RG8"/>
<dbReference type="FunCoup" id="Q95RG8">
    <property type="interactions" value="1100"/>
</dbReference>
<dbReference type="IntAct" id="Q95RG8">
    <property type="interactions" value="11"/>
</dbReference>
<dbReference type="STRING" id="7227.FBpp0087353"/>
<dbReference type="PaxDb" id="7227-FBpp0087353"/>
<dbReference type="DNASU" id="36122"/>
<dbReference type="EnsemblMetazoa" id="FBtr0088258">
    <property type="protein sequence ID" value="FBpp0087353"/>
    <property type="gene ID" value="FBgn0033539"/>
</dbReference>
<dbReference type="GeneID" id="36122"/>
<dbReference type="KEGG" id="dme:Dmel_CG16728"/>
<dbReference type="UCSC" id="CG16728-RA">
    <property type="organism name" value="d. melanogaster"/>
</dbReference>
<dbReference type="AGR" id="FB:FBgn0033539"/>
<dbReference type="CTD" id="36122"/>
<dbReference type="FlyBase" id="FBgn0033539">
    <property type="gene designation" value="Git"/>
</dbReference>
<dbReference type="VEuPathDB" id="VectorBase:FBgn0033539"/>
<dbReference type="eggNOG" id="KOG0818">
    <property type="taxonomic scope" value="Eukaryota"/>
</dbReference>
<dbReference type="GeneTree" id="ENSGT00940000169561"/>
<dbReference type="HOGENOM" id="CLU_009739_0_0_1"/>
<dbReference type="InParanoid" id="Q95RG8"/>
<dbReference type="OMA" id="DPNYYHE"/>
<dbReference type="OrthoDB" id="5588096at2759"/>
<dbReference type="PhylomeDB" id="Q95RG8"/>
<dbReference type="Reactome" id="R-DME-3928664">
    <property type="pathway name" value="Ephrin signaling"/>
</dbReference>
<dbReference type="Reactome" id="R-DME-9013149">
    <property type="pathway name" value="RAC1 GTPase cycle"/>
</dbReference>
<dbReference type="Reactome" id="R-DME-9013404">
    <property type="pathway name" value="RAC2 GTPase cycle"/>
</dbReference>
<dbReference type="Reactome" id="R-DME-9013406">
    <property type="pathway name" value="RHOQ GTPase cycle"/>
</dbReference>
<dbReference type="Reactome" id="R-DME-9013420">
    <property type="pathway name" value="RHOU GTPase cycle"/>
</dbReference>
<dbReference type="Reactome" id="R-DME-9013423">
    <property type="pathway name" value="RAC3 GTPase cycle"/>
</dbReference>
<dbReference type="Reactome" id="R-DME-9013424">
    <property type="pathway name" value="RHOV GTPase cycle"/>
</dbReference>
<dbReference type="SignaLink" id="Q95RG8"/>
<dbReference type="BioGRID-ORCS" id="36122">
    <property type="hits" value="0 hits in 3 CRISPR screens"/>
</dbReference>
<dbReference type="GenomeRNAi" id="36122"/>
<dbReference type="PRO" id="PR:Q95RG8"/>
<dbReference type="Proteomes" id="UP000000803">
    <property type="component" value="Chromosome 2R"/>
</dbReference>
<dbReference type="Bgee" id="FBgn0033539">
    <property type="expression patterns" value="Expressed in embryonic/larval hemocyte (Drosophila) and 70 other cell types or tissues"/>
</dbReference>
<dbReference type="GO" id="GO:0031252">
    <property type="term" value="C:cell leading edge"/>
    <property type="evidence" value="ECO:0000314"/>
    <property type="project" value="FlyBase"/>
</dbReference>
<dbReference type="GO" id="GO:0005813">
    <property type="term" value="C:centrosome"/>
    <property type="evidence" value="ECO:0007669"/>
    <property type="project" value="UniProtKB-SubCell"/>
</dbReference>
<dbReference type="GO" id="GO:0005737">
    <property type="term" value="C:cytoplasm"/>
    <property type="evidence" value="ECO:0000314"/>
    <property type="project" value="FlyBase"/>
</dbReference>
<dbReference type="GO" id="GO:0005925">
    <property type="term" value="C:focal adhesion"/>
    <property type="evidence" value="ECO:0007669"/>
    <property type="project" value="UniProtKB-SubCell"/>
</dbReference>
<dbReference type="GO" id="GO:0030027">
    <property type="term" value="C:lamellipodium"/>
    <property type="evidence" value="ECO:0007669"/>
    <property type="project" value="UniProtKB-SubCell"/>
</dbReference>
<dbReference type="GO" id="GO:0048786">
    <property type="term" value="C:presynaptic active zone"/>
    <property type="evidence" value="ECO:0000314"/>
    <property type="project" value="FlyBase"/>
</dbReference>
<dbReference type="GO" id="GO:0000922">
    <property type="term" value="C:spindle pole"/>
    <property type="evidence" value="ECO:0007669"/>
    <property type="project" value="UniProtKB-SubCell"/>
</dbReference>
<dbReference type="GO" id="GO:0045202">
    <property type="term" value="C:synapse"/>
    <property type="evidence" value="ECO:0000318"/>
    <property type="project" value="GO_Central"/>
</dbReference>
<dbReference type="GO" id="GO:0005096">
    <property type="term" value="F:GTPase activator activity"/>
    <property type="evidence" value="ECO:0000255"/>
    <property type="project" value="FlyBase"/>
</dbReference>
<dbReference type="GO" id="GO:0060090">
    <property type="term" value="F:molecular adaptor activity"/>
    <property type="evidence" value="ECO:0000315"/>
    <property type="project" value="FlyBase"/>
</dbReference>
<dbReference type="GO" id="GO:0031267">
    <property type="term" value="F:small GTPase binding"/>
    <property type="evidence" value="ECO:0000318"/>
    <property type="project" value="GO_Central"/>
</dbReference>
<dbReference type="GO" id="GO:0008270">
    <property type="term" value="F:zinc ion binding"/>
    <property type="evidence" value="ECO:0007669"/>
    <property type="project" value="UniProtKB-KW"/>
</dbReference>
<dbReference type="GO" id="GO:0007420">
    <property type="term" value="P:brain development"/>
    <property type="evidence" value="ECO:0000315"/>
    <property type="project" value="UniProtKB"/>
</dbReference>
<dbReference type="GO" id="GO:0016319">
    <property type="term" value="P:mushroom body development"/>
    <property type="evidence" value="ECO:0000315"/>
    <property type="project" value="FlyBase"/>
</dbReference>
<dbReference type="GO" id="GO:0046621">
    <property type="term" value="P:negative regulation of organ growth"/>
    <property type="evidence" value="ECO:0000316"/>
    <property type="project" value="FlyBase"/>
</dbReference>
<dbReference type="GO" id="GO:0035332">
    <property type="term" value="P:positive regulation of hippo signaling"/>
    <property type="evidence" value="ECO:0000316"/>
    <property type="project" value="FlyBase"/>
</dbReference>
<dbReference type="GO" id="GO:1905383">
    <property type="term" value="P:protein localization to presynapse"/>
    <property type="evidence" value="ECO:0000315"/>
    <property type="project" value="FlyBase"/>
</dbReference>
<dbReference type="GO" id="GO:0032012">
    <property type="term" value="P:regulation of ARF protein signal transduction"/>
    <property type="evidence" value="ECO:0000318"/>
    <property type="project" value="GO_Central"/>
</dbReference>
<dbReference type="GO" id="GO:0008277">
    <property type="term" value="P:regulation of G protein-coupled receptor signaling pathway"/>
    <property type="evidence" value="ECO:0000318"/>
    <property type="project" value="GO_Central"/>
</dbReference>
<dbReference type="GO" id="GO:0007525">
    <property type="term" value="P:somatic muscle development"/>
    <property type="evidence" value="ECO:0000315"/>
    <property type="project" value="FlyBase"/>
</dbReference>
<dbReference type="GO" id="GO:0099504">
    <property type="term" value="P:synaptic vesicle cycle"/>
    <property type="evidence" value="ECO:0000315"/>
    <property type="project" value="FlyBase"/>
</dbReference>
<dbReference type="GO" id="GO:0036465">
    <property type="term" value="P:synaptic vesicle recycling"/>
    <property type="evidence" value="ECO:0000315"/>
    <property type="project" value="FlyBase"/>
</dbReference>
<dbReference type="CDD" id="cd08833">
    <property type="entry name" value="ArfGap_GIT"/>
    <property type="match status" value="1"/>
</dbReference>
<dbReference type="Gene3D" id="1.25.40.20">
    <property type="entry name" value="Ankyrin repeat-containing domain"/>
    <property type="match status" value="1"/>
</dbReference>
<dbReference type="Gene3D" id="1.10.220.150">
    <property type="entry name" value="Arf GTPase activating protein"/>
    <property type="match status" value="1"/>
</dbReference>
<dbReference type="Gene3D" id="1.20.120.330">
    <property type="entry name" value="Nucleotidyltransferases domain 2"/>
    <property type="match status" value="1"/>
</dbReference>
<dbReference type="InterPro" id="IPR002110">
    <property type="entry name" value="Ankyrin_rpt"/>
</dbReference>
<dbReference type="InterPro" id="IPR036770">
    <property type="entry name" value="Ankyrin_rpt-contain_sf"/>
</dbReference>
<dbReference type="InterPro" id="IPR037278">
    <property type="entry name" value="ARFGAP/RecO"/>
</dbReference>
<dbReference type="InterPro" id="IPR001164">
    <property type="entry name" value="ArfGAP_dom"/>
</dbReference>
<dbReference type="InterPro" id="IPR038508">
    <property type="entry name" value="ArfGAP_dom_sf"/>
</dbReference>
<dbReference type="InterPro" id="IPR047161">
    <property type="entry name" value="GIT-like"/>
</dbReference>
<dbReference type="InterPro" id="IPR022018">
    <property type="entry name" value="GIT1_C"/>
</dbReference>
<dbReference type="InterPro" id="IPR013724">
    <property type="entry name" value="GIT_SHD"/>
</dbReference>
<dbReference type="PANTHER" id="PTHR46097:SF3">
    <property type="entry name" value="ARF GTPASE-ACTIVATING PROTEIN GIT"/>
    <property type="match status" value="1"/>
</dbReference>
<dbReference type="PANTHER" id="PTHR46097">
    <property type="entry name" value="G PROTEIN-COUPLED RECEPTOR KINASE INTERACTING ARFGAP"/>
    <property type="match status" value="1"/>
</dbReference>
<dbReference type="Pfam" id="PF12796">
    <property type="entry name" value="Ank_2"/>
    <property type="match status" value="1"/>
</dbReference>
<dbReference type="Pfam" id="PF01412">
    <property type="entry name" value="ArfGap"/>
    <property type="match status" value="1"/>
</dbReference>
<dbReference type="Pfam" id="PF12205">
    <property type="entry name" value="GIT1_C"/>
    <property type="match status" value="1"/>
</dbReference>
<dbReference type="Pfam" id="PF08518">
    <property type="entry name" value="GIT_SHD"/>
    <property type="match status" value="2"/>
</dbReference>
<dbReference type="PRINTS" id="PR00405">
    <property type="entry name" value="REVINTRACTNG"/>
</dbReference>
<dbReference type="SMART" id="SM00248">
    <property type="entry name" value="ANK"/>
    <property type="match status" value="2"/>
</dbReference>
<dbReference type="SMART" id="SM00105">
    <property type="entry name" value="ArfGap"/>
    <property type="match status" value="1"/>
</dbReference>
<dbReference type="SMART" id="SM00555">
    <property type="entry name" value="GIT"/>
    <property type="match status" value="2"/>
</dbReference>
<dbReference type="SUPFAM" id="SSF48403">
    <property type="entry name" value="Ankyrin repeat"/>
    <property type="match status" value="1"/>
</dbReference>
<dbReference type="SUPFAM" id="SSF57863">
    <property type="entry name" value="ArfGap/RecO-like zinc finger"/>
    <property type="match status" value="1"/>
</dbReference>
<dbReference type="PROSITE" id="PS50297">
    <property type="entry name" value="ANK_REP_REGION"/>
    <property type="match status" value="1"/>
</dbReference>
<dbReference type="PROSITE" id="PS50088">
    <property type="entry name" value="ANK_REPEAT"/>
    <property type="match status" value="1"/>
</dbReference>
<dbReference type="PROSITE" id="PS50115">
    <property type="entry name" value="ARFGAP"/>
    <property type="match status" value="1"/>
</dbReference>